<reference key="1">
    <citation type="journal article" date="2000" name="DNA Cell Biol.">
        <title>The gene encoding the 17-kDa antigen of Bartonella henselae is located within a cluster of genes homologous to the virB virulence operon.</title>
        <authorList>
            <person name="Padmalayam I."/>
            <person name="Karem K."/>
            <person name="Baumstark B.R."/>
            <person name="Massung R."/>
        </authorList>
    </citation>
    <scope>NUCLEOTIDE SEQUENCE [GENOMIC DNA]</scope>
    <source>
        <strain>ATCC 49882 / DSM 28221 / CCUG 30454 / Houston 1</strain>
    </source>
</reference>
<reference key="2">
    <citation type="journal article" date="2004" name="Proc. Natl. Acad. Sci. U.S.A.">
        <title>The louse-borne human pathogen Bartonella quintana is a genomic derivative of the zoonotic agent Bartonella henselae.</title>
        <authorList>
            <person name="Alsmark U.C.M."/>
            <person name="Frank A.C."/>
            <person name="Karlberg E.O."/>
            <person name="Legault B.-A."/>
            <person name="Ardell D.H."/>
            <person name="Canbaeck B."/>
            <person name="Eriksson A.-S."/>
            <person name="Naeslund A.K."/>
            <person name="Handley S.A."/>
            <person name="Huvet M."/>
            <person name="La Scola B."/>
            <person name="Holmberg M."/>
            <person name="Andersson S.G.E."/>
        </authorList>
    </citation>
    <scope>NUCLEOTIDE SEQUENCE [LARGE SCALE GENOMIC DNA]</scope>
    <source>
        <strain>ATCC 49882 / DSM 28221 / CCUG 30454 / Houston 1</strain>
    </source>
</reference>
<reference key="3">
    <citation type="journal article" date="2001" name="Infect. Immun.">
        <title>Intracellular induction of the Bartonella henselae virB operon by human endothelial cells.</title>
        <authorList>
            <person name="Schmiederer M."/>
            <person name="Arcenas R."/>
            <person name="Widen R."/>
            <person name="Valkov N."/>
            <person name="Anderson B.E."/>
        </authorList>
    </citation>
    <scope>INDUCTION</scope>
    <source>
        <strain>ATCC 49882 / DSM 28221 / CCUG 30454 / Houston 1</strain>
    </source>
</reference>
<reference key="4">
    <citation type="journal article" date="2004" name="J. Bacteriol.">
        <title>Interaction between protein subunits of the type IV secretion system of Bartonella henselae.</title>
        <authorList>
            <person name="Shamaei-Tousi A."/>
            <person name="Cahill R."/>
            <person name="Frankel G."/>
        </authorList>
    </citation>
    <scope>INTERACTION WITH VIRB9</scope>
</reference>
<reference key="5">
    <citation type="journal article" date="2004" name="Mol. Microbiol.">
        <title>The VirB type IV secretion system of Bartonella henselae mediates invasion, proinflammatory activation and antiapoptotic protection of endothelial cells.</title>
        <authorList>
            <person name="Schmid M.C."/>
            <person name="Schulein R."/>
            <person name="Dehio M."/>
            <person name="Denecker G."/>
            <person name="Carena I."/>
            <person name="Dehio C."/>
        </authorList>
    </citation>
    <scope>FUNCTION</scope>
    <source>
        <strain>ATCC 49882 / DSM 28221 / CCUG 30454 / Houston 1</strain>
    </source>
</reference>
<reference key="6">
    <citation type="journal article" date="2005" name="Proc. Natl. Acad. Sci. U.S.A.">
        <title>A bipartite signal mediates the transfer of type IV secretion substrates of Bartonella henselae into human cells.</title>
        <authorList>
            <person name="Schulein R."/>
            <person name="Guye P."/>
            <person name="Rhomberg T.A."/>
            <person name="Schmid M.C."/>
            <person name="Schroeder G."/>
            <person name="Vergunst A.C."/>
            <person name="Carena I."/>
            <person name="Dehio C."/>
        </authorList>
    </citation>
    <scope>FUNCTION</scope>
    <source>
        <strain>ATCC 49882 / DSM 28221 / CCUG 30454 / Houston 1</strain>
    </source>
</reference>
<organism>
    <name type="scientific">Bartonella henselae (strain ATCC 49882 / DSM 28221 / CCUG 30454 / Houston 1)</name>
    <name type="common">Rochalimaea henselae</name>
    <dbReference type="NCBI Taxonomy" id="283166"/>
    <lineage>
        <taxon>Bacteria</taxon>
        <taxon>Pseudomonadati</taxon>
        <taxon>Pseudomonadota</taxon>
        <taxon>Alphaproteobacteria</taxon>
        <taxon>Hyphomicrobiales</taxon>
        <taxon>Bartonellaceae</taxon>
        <taxon>Bartonella</taxon>
    </lineage>
</organism>
<name>VIRBB_BARHE</name>
<keyword id="KW-0067">ATP-binding</keyword>
<keyword id="KW-0997">Cell inner membrane</keyword>
<keyword id="KW-1003">Cell membrane</keyword>
<keyword id="KW-0472">Membrane</keyword>
<keyword id="KW-0547">Nucleotide-binding</keyword>
<keyword id="KW-0813">Transport</keyword>
<keyword id="KW-0843">Virulence</keyword>
<feature type="chain" id="PRO_0000273533" description="Type IV secretion system protein VirB11">
    <location>
        <begin position="1"/>
        <end position="356"/>
    </location>
</feature>
<feature type="binding site" evidence="1">
    <location>
        <begin position="187"/>
        <end position="194"/>
    </location>
    <ligand>
        <name>ATP</name>
        <dbReference type="ChEBI" id="CHEBI:30616"/>
    </ligand>
</feature>
<evidence type="ECO:0000255" key="1"/>
<evidence type="ECO:0000269" key="2">
    <source>
    </source>
</evidence>
<evidence type="ECO:0000269" key="3">
    <source>
    </source>
</evidence>
<evidence type="ECO:0000269" key="4">
    <source>
    </source>
</evidence>
<evidence type="ECO:0000269" key="5">
    <source>
    </source>
</evidence>
<evidence type="ECO:0000305" key="6"/>
<accession>Q9RNC7</accession>
<comment type="function">
    <text evidence="3 5">The type IV secretion system VirB/VirD4 is a major virulence determinant for subversion of human endothelial cell (HEC) function. VirB-dependent changes of HEC include massive cytoskeletal rearrangements, a pro-inflammatory activation by nuclear factor NF-kappa-B, inhibition of early and late events of apoptosis, leading to an increased cell survival, and, at high infection doses, a cytostatic or cytotoxic effect, which interferes with a potent VirB-independent mitogenic activity. These changes of HEC require the T4S coupling protein VirD4 and at least one of the effector proteins BepA-G. Altogether with VirB4, may be implicated in providing the energy, via hydrolysis of ATP, for the assembly of secretion system and substrate transport.</text>
</comment>
<comment type="subunit">
    <text evidence="4">Interacts with VirB9.</text>
</comment>
<comment type="subcellular location">
    <subcellularLocation>
        <location evidence="6">Cell inner membrane</location>
    </subcellularLocation>
</comment>
<comment type="induction">
    <text evidence="2">During the interaction with the intracellular environment of host cells.</text>
</comment>
<comment type="similarity">
    <text evidence="6">Belongs to the GSP E family.</text>
</comment>
<sequence length="356" mass="39721">MNQNLHTLSDETVAIVLTKLEPISTFLKDENLFEIVINRPYQVMTEGVEGWKTIETPALSFNELMGIAKVVASYSKQNISEKNPILSATLPGNERIQIVIPPAVEKNTISMTIRKPSSRSFSLEDLANKGLFSVCEQVSFTPLNNYLSHLSELKHIDHDLVRAYAKKDFVFFLNQAVQCQKNILIAGKTGSGKTTLSKALIAKIPDDERIITIEDTPELVVPQPNYVSMIYSKDGQGLASVGPKELLESALRMRPDRILLQELRDGTAFYYIRNVNSGHPGSITTVHASTALAAFEQMTLLVKESEGGGDLERDDIRGLLISMIDIIIQCKRIEGKFKVTEIYYDPFKQRNIFGGN</sequence>
<proteinExistence type="evidence at protein level"/>
<protein>
    <recommendedName>
        <fullName>Type IV secretion system protein VirB11</fullName>
    </recommendedName>
</protein>
<gene>
    <name type="primary">virB11</name>
    <name type="ordered locus">BH13350</name>
</gene>
<dbReference type="EMBL" id="AF182718">
    <property type="protein sequence ID" value="AAF00949.1"/>
    <property type="molecule type" value="Genomic_DNA"/>
</dbReference>
<dbReference type="EMBL" id="BX897699">
    <property type="protein sequence ID" value="CAF28108.1"/>
    <property type="molecule type" value="Genomic_DNA"/>
</dbReference>
<dbReference type="RefSeq" id="WP_011181136.1">
    <property type="nucleotide sequence ID" value="NZ_LRIJ02000001.1"/>
</dbReference>
<dbReference type="SMR" id="Q9RNC7"/>
<dbReference type="PaxDb" id="283166-BH13350"/>
<dbReference type="EnsemblBacteria" id="CAF28108">
    <property type="protein sequence ID" value="CAF28108"/>
    <property type="gene ID" value="BH13350"/>
</dbReference>
<dbReference type="GeneID" id="92985946"/>
<dbReference type="KEGG" id="bhe:BH13350"/>
<dbReference type="eggNOG" id="COG0630">
    <property type="taxonomic scope" value="Bacteria"/>
</dbReference>
<dbReference type="OrthoDB" id="9810761at2"/>
<dbReference type="Proteomes" id="UP000000421">
    <property type="component" value="Chromosome"/>
</dbReference>
<dbReference type="GO" id="GO:0005886">
    <property type="term" value="C:plasma membrane"/>
    <property type="evidence" value="ECO:0007669"/>
    <property type="project" value="UniProtKB-SubCell"/>
</dbReference>
<dbReference type="GO" id="GO:0043684">
    <property type="term" value="C:type IV secretion system complex"/>
    <property type="evidence" value="ECO:0007669"/>
    <property type="project" value="InterPro"/>
</dbReference>
<dbReference type="GO" id="GO:0005524">
    <property type="term" value="F:ATP binding"/>
    <property type="evidence" value="ECO:0007669"/>
    <property type="project" value="UniProtKB-KW"/>
</dbReference>
<dbReference type="GO" id="GO:0016887">
    <property type="term" value="F:ATP hydrolysis activity"/>
    <property type="evidence" value="ECO:0007669"/>
    <property type="project" value="InterPro"/>
</dbReference>
<dbReference type="GO" id="GO:0044097">
    <property type="term" value="P:secretion by the type IV secretion system"/>
    <property type="evidence" value="ECO:0007669"/>
    <property type="project" value="InterPro"/>
</dbReference>
<dbReference type="CDD" id="cd01130">
    <property type="entry name" value="VirB11-like_ATPase"/>
    <property type="match status" value="1"/>
</dbReference>
<dbReference type="Gene3D" id="3.30.450.90">
    <property type="match status" value="1"/>
</dbReference>
<dbReference type="Gene3D" id="3.40.50.300">
    <property type="entry name" value="P-loop containing nucleotide triphosphate hydrolases"/>
    <property type="match status" value="1"/>
</dbReference>
<dbReference type="InterPro" id="IPR003593">
    <property type="entry name" value="AAA+_ATPase"/>
</dbReference>
<dbReference type="InterPro" id="IPR027417">
    <property type="entry name" value="P-loop_NTPase"/>
</dbReference>
<dbReference type="InterPro" id="IPR001482">
    <property type="entry name" value="T2SS/T4SS_dom"/>
</dbReference>
<dbReference type="InterPro" id="IPR050921">
    <property type="entry name" value="T4SS_GSP_E_ATPase"/>
</dbReference>
<dbReference type="InterPro" id="IPR014155">
    <property type="entry name" value="VirB11"/>
</dbReference>
<dbReference type="NCBIfam" id="TIGR02788">
    <property type="entry name" value="VirB11"/>
    <property type="match status" value="1"/>
</dbReference>
<dbReference type="PANTHER" id="PTHR30486">
    <property type="entry name" value="TWITCHING MOTILITY PROTEIN PILT"/>
    <property type="match status" value="1"/>
</dbReference>
<dbReference type="PANTHER" id="PTHR30486:SF6">
    <property type="entry name" value="TYPE IV PILUS RETRACTATION ATPASE PILT"/>
    <property type="match status" value="1"/>
</dbReference>
<dbReference type="Pfam" id="PF00437">
    <property type="entry name" value="T2SSE"/>
    <property type="match status" value="1"/>
</dbReference>
<dbReference type="SMART" id="SM00382">
    <property type="entry name" value="AAA"/>
    <property type="match status" value="1"/>
</dbReference>
<dbReference type="SUPFAM" id="SSF52540">
    <property type="entry name" value="P-loop containing nucleoside triphosphate hydrolases"/>
    <property type="match status" value="1"/>
</dbReference>